<proteinExistence type="inferred from homology"/>
<gene>
    <name evidence="1" type="primary">tatA</name>
    <name type="ordered locus">CGSHiEE_02325</name>
</gene>
<evidence type="ECO:0000255" key="1">
    <source>
        <dbReference type="HAMAP-Rule" id="MF_00236"/>
    </source>
</evidence>
<protein>
    <recommendedName>
        <fullName evidence="1">Sec-independent protein translocase protein TatA</fullName>
    </recommendedName>
</protein>
<dbReference type="EMBL" id="CP000671">
    <property type="protein sequence ID" value="ABQ97918.1"/>
    <property type="molecule type" value="Genomic_DNA"/>
</dbReference>
<dbReference type="SMR" id="A5UAW7"/>
<dbReference type="KEGG" id="hip:CGSHiEE_02325"/>
<dbReference type="HOGENOM" id="CLU_086034_5_1_6"/>
<dbReference type="GO" id="GO:0033281">
    <property type="term" value="C:TAT protein transport complex"/>
    <property type="evidence" value="ECO:0007669"/>
    <property type="project" value="UniProtKB-UniRule"/>
</dbReference>
<dbReference type="GO" id="GO:0008320">
    <property type="term" value="F:protein transmembrane transporter activity"/>
    <property type="evidence" value="ECO:0007669"/>
    <property type="project" value="UniProtKB-UniRule"/>
</dbReference>
<dbReference type="GO" id="GO:0043953">
    <property type="term" value="P:protein transport by the Tat complex"/>
    <property type="evidence" value="ECO:0007669"/>
    <property type="project" value="UniProtKB-UniRule"/>
</dbReference>
<dbReference type="Gene3D" id="1.20.5.3310">
    <property type="match status" value="1"/>
</dbReference>
<dbReference type="HAMAP" id="MF_00236">
    <property type="entry name" value="TatA_E"/>
    <property type="match status" value="1"/>
</dbReference>
<dbReference type="InterPro" id="IPR003369">
    <property type="entry name" value="TatA/B/E"/>
</dbReference>
<dbReference type="InterPro" id="IPR006312">
    <property type="entry name" value="TatA/E"/>
</dbReference>
<dbReference type="NCBIfam" id="TIGR01411">
    <property type="entry name" value="tatAE"/>
    <property type="match status" value="1"/>
</dbReference>
<dbReference type="PANTHER" id="PTHR42982">
    <property type="entry name" value="SEC-INDEPENDENT PROTEIN TRANSLOCASE PROTEIN TATA"/>
    <property type="match status" value="1"/>
</dbReference>
<dbReference type="PANTHER" id="PTHR42982:SF1">
    <property type="entry name" value="SEC-INDEPENDENT PROTEIN TRANSLOCASE PROTEIN TATA"/>
    <property type="match status" value="1"/>
</dbReference>
<dbReference type="Pfam" id="PF02416">
    <property type="entry name" value="TatA_B_E"/>
    <property type="match status" value="1"/>
</dbReference>
<feature type="chain" id="PRO_1000044389" description="Sec-independent protein translocase protein TatA">
    <location>
        <begin position="1"/>
        <end position="75"/>
    </location>
</feature>
<feature type="transmembrane region" description="Helical" evidence="1">
    <location>
        <begin position="1"/>
        <end position="21"/>
    </location>
</feature>
<accession>A5UAW7</accession>
<organism>
    <name type="scientific">Haemophilus influenzae (strain PittEE)</name>
    <dbReference type="NCBI Taxonomy" id="374930"/>
    <lineage>
        <taxon>Bacteria</taxon>
        <taxon>Pseudomonadati</taxon>
        <taxon>Pseudomonadota</taxon>
        <taxon>Gammaproteobacteria</taxon>
        <taxon>Pasteurellales</taxon>
        <taxon>Pasteurellaceae</taxon>
        <taxon>Haemophilus</taxon>
    </lineage>
</organism>
<name>TATA_HAEIE</name>
<sequence length="75" mass="8208">MFGLSPAQLIILLVVILLIFGTKKLRNAGSDLGAAVKGFKKAMKEDEKVKDAEFKSIDNETASAKKENIKEKEQA</sequence>
<comment type="function">
    <text evidence="1">Part of the twin-arginine translocation (Tat) system that transports large folded proteins containing a characteristic twin-arginine motif in their signal peptide across membranes. TatA could form the protein-conducting channel of the Tat system.</text>
</comment>
<comment type="subunit">
    <text evidence="1">The Tat system comprises two distinct complexes: a TatABC complex, containing multiple copies of TatA, TatB and TatC subunits, and a separate TatA complex, containing only TatA subunits. Substrates initially bind to the TatABC complex, which probably triggers association of the separate TatA complex to form the active translocon.</text>
</comment>
<comment type="subcellular location">
    <subcellularLocation>
        <location evidence="1">Cell inner membrane</location>
        <topology evidence="1">Single-pass membrane protein</topology>
    </subcellularLocation>
</comment>
<comment type="similarity">
    <text evidence="1">Belongs to the TatA/E family.</text>
</comment>
<keyword id="KW-0997">Cell inner membrane</keyword>
<keyword id="KW-1003">Cell membrane</keyword>
<keyword id="KW-0472">Membrane</keyword>
<keyword id="KW-0653">Protein transport</keyword>
<keyword id="KW-0811">Translocation</keyword>
<keyword id="KW-0812">Transmembrane</keyword>
<keyword id="KW-1133">Transmembrane helix</keyword>
<keyword id="KW-0813">Transport</keyword>
<reference key="1">
    <citation type="journal article" date="2007" name="Genome Biol.">
        <title>Characterization and modeling of the Haemophilus influenzae core and supragenomes based on the complete genomic sequences of Rd and 12 clinical nontypeable strains.</title>
        <authorList>
            <person name="Hogg J.S."/>
            <person name="Hu F.Z."/>
            <person name="Janto B."/>
            <person name="Boissy R."/>
            <person name="Hayes J."/>
            <person name="Keefe R."/>
            <person name="Post J.C."/>
            <person name="Ehrlich G.D."/>
        </authorList>
    </citation>
    <scope>NUCLEOTIDE SEQUENCE [LARGE SCALE GENOMIC DNA]</scope>
    <source>
        <strain>PittEE</strain>
    </source>
</reference>